<organism>
    <name type="scientific">Xanthomonas euvesicatoria pv. vesicatoria (strain 85-10)</name>
    <name type="common">Xanthomonas campestris pv. vesicatoria</name>
    <dbReference type="NCBI Taxonomy" id="316273"/>
    <lineage>
        <taxon>Bacteria</taxon>
        <taxon>Pseudomonadati</taxon>
        <taxon>Pseudomonadota</taxon>
        <taxon>Gammaproteobacteria</taxon>
        <taxon>Lysobacterales</taxon>
        <taxon>Lysobacteraceae</taxon>
        <taxon>Xanthomonas</taxon>
    </lineage>
</organism>
<comment type="function">
    <text evidence="1">Functions in the biosynthesis of branched-chain amino acids. Catalyzes the dehydration of (2R,3R)-2,3-dihydroxy-3-methylpentanoate (2,3-dihydroxy-3-methylvalerate) into 2-oxo-3-methylpentanoate (2-oxo-3-methylvalerate) and of (2R)-2,3-dihydroxy-3-methylbutanoate (2,3-dihydroxyisovalerate) into 2-oxo-3-methylbutanoate (2-oxoisovalerate), the penultimate precursor to L-isoleucine and L-valine, respectively.</text>
</comment>
<comment type="catalytic activity">
    <reaction evidence="1">
        <text>(2R)-2,3-dihydroxy-3-methylbutanoate = 3-methyl-2-oxobutanoate + H2O</text>
        <dbReference type="Rhea" id="RHEA:24809"/>
        <dbReference type="ChEBI" id="CHEBI:11851"/>
        <dbReference type="ChEBI" id="CHEBI:15377"/>
        <dbReference type="ChEBI" id="CHEBI:49072"/>
        <dbReference type="EC" id="4.2.1.9"/>
    </reaction>
    <physiologicalReaction direction="left-to-right" evidence="1">
        <dbReference type="Rhea" id="RHEA:24810"/>
    </physiologicalReaction>
</comment>
<comment type="catalytic activity">
    <reaction evidence="1">
        <text>(2R,3R)-2,3-dihydroxy-3-methylpentanoate = (S)-3-methyl-2-oxopentanoate + H2O</text>
        <dbReference type="Rhea" id="RHEA:27694"/>
        <dbReference type="ChEBI" id="CHEBI:15377"/>
        <dbReference type="ChEBI" id="CHEBI:35146"/>
        <dbReference type="ChEBI" id="CHEBI:49258"/>
        <dbReference type="EC" id="4.2.1.9"/>
    </reaction>
    <physiologicalReaction direction="left-to-right" evidence="1">
        <dbReference type="Rhea" id="RHEA:27695"/>
    </physiologicalReaction>
</comment>
<comment type="cofactor">
    <cofactor evidence="1">
        <name>[2Fe-2S] cluster</name>
        <dbReference type="ChEBI" id="CHEBI:190135"/>
    </cofactor>
    <text evidence="1">Binds 1 [2Fe-2S] cluster per subunit. This cluster acts as a Lewis acid cofactor.</text>
</comment>
<comment type="cofactor">
    <cofactor evidence="1">
        <name>Mg(2+)</name>
        <dbReference type="ChEBI" id="CHEBI:18420"/>
    </cofactor>
</comment>
<comment type="pathway">
    <text evidence="1">Amino-acid biosynthesis; L-isoleucine biosynthesis; L-isoleucine from 2-oxobutanoate: step 3/4.</text>
</comment>
<comment type="pathway">
    <text evidence="1">Amino-acid biosynthesis; L-valine biosynthesis; L-valine from pyruvate: step 3/4.</text>
</comment>
<comment type="subunit">
    <text evidence="1">Homodimer.</text>
</comment>
<comment type="similarity">
    <text evidence="1">Belongs to the IlvD/Edd family.</text>
</comment>
<accession>Q3BYS5</accession>
<sequence length="612" mass="65172">MPEYRSKTSTHGRNMAGARALWRATGMRDGDFHKPIIAIANSFTQFVPGHVHLKDLGQLVAREIERVGGVAKEFDTIAVDDGIAMGHDGMLYSLPSREIIADSVEYMVNAHCADALVCISNCDKITPGMLMAALRLNIPTVFVSGGPMEAGKTKLAEHKLDLIDAMVIAADDSASDEKVAEFERSACPTCGSCSGMFTANSMNCLTEALGLSLPGNGTVVATHADREQLFLRAGRVAVELCHRWYGGEDPTALPRGIATFEAFENAMTLDIAMGGSTNTILHLLAAAQEGEVAFGMHDIDRLSKRVPQLCKVAPNTPKYHIEDVHRAGGIMAILGELARGGLLHTNAATVHARTLAEAIAQWDVTQTDDETVHTFYKAGPAGIPTQIAFSQATRWDSLDTDRSEGCIRDIAHAFSQEGGLAVLYGNIARDGCVVKTAGVDESIHVFEGTARVFESQDAAVKGILADEVVAGDVVVIRYEGPKGGPGMQEMLYPTSYLKSKGLGKQCALLTDGRFSGGTSGLSIGHASPEAAAGGAIGLVRDGDRILIDIPKRSINLLISDEELALRRAEQDAKGWKPVEVRPRKVTTALKAYALLATSADKGAVRDKALLDG</sequence>
<dbReference type="EC" id="4.2.1.9" evidence="1"/>
<dbReference type="EMBL" id="AM039952">
    <property type="protein sequence ID" value="CAJ21988.1"/>
    <property type="molecule type" value="Genomic_DNA"/>
</dbReference>
<dbReference type="RefSeq" id="WP_011346050.1">
    <property type="nucleotide sequence ID" value="NZ_CP017190.1"/>
</dbReference>
<dbReference type="SMR" id="Q3BYS5"/>
<dbReference type="STRING" id="456327.BJD11_21085"/>
<dbReference type="KEGG" id="xcv:XCV0357"/>
<dbReference type="eggNOG" id="COG0129">
    <property type="taxonomic scope" value="Bacteria"/>
</dbReference>
<dbReference type="HOGENOM" id="CLU_014271_4_2_6"/>
<dbReference type="UniPathway" id="UPA00047">
    <property type="reaction ID" value="UER00057"/>
</dbReference>
<dbReference type="UniPathway" id="UPA00049">
    <property type="reaction ID" value="UER00061"/>
</dbReference>
<dbReference type="Proteomes" id="UP000007069">
    <property type="component" value="Chromosome"/>
</dbReference>
<dbReference type="GO" id="GO:0005829">
    <property type="term" value="C:cytosol"/>
    <property type="evidence" value="ECO:0007669"/>
    <property type="project" value="TreeGrafter"/>
</dbReference>
<dbReference type="GO" id="GO:0051537">
    <property type="term" value="F:2 iron, 2 sulfur cluster binding"/>
    <property type="evidence" value="ECO:0007669"/>
    <property type="project" value="UniProtKB-UniRule"/>
</dbReference>
<dbReference type="GO" id="GO:0004160">
    <property type="term" value="F:dihydroxy-acid dehydratase activity"/>
    <property type="evidence" value="ECO:0007669"/>
    <property type="project" value="UniProtKB-UniRule"/>
</dbReference>
<dbReference type="GO" id="GO:0000287">
    <property type="term" value="F:magnesium ion binding"/>
    <property type="evidence" value="ECO:0007669"/>
    <property type="project" value="UniProtKB-UniRule"/>
</dbReference>
<dbReference type="GO" id="GO:0009097">
    <property type="term" value="P:isoleucine biosynthetic process"/>
    <property type="evidence" value="ECO:0007669"/>
    <property type="project" value="UniProtKB-UniRule"/>
</dbReference>
<dbReference type="GO" id="GO:0009099">
    <property type="term" value="P:L-valine biosynthetic process"/>
    <property type="evidence" value="ECO:0007669"/>
    <property type="project" value="UniProtKB-UniRule"/>
</dbReference>
<dbReference type="FunFam" id="3.50.30.80:FF:000001">
    <property type="entry name" value="Dihydroxy-acid dehydratase"/>
    <property type="match status" value="1"/>
</dbReference>
<dbReference type="Gene3D" id="3.50.30.80">
    <property type="entry name" value="IlvD/EDD C-terminal domain-like"/>
    <property type="match status" value="1"/>
</dbReference>
<dbReference type="HAMAP" id="MF_00012">
    <property type="entry name" value="IlvD"/>
    <property type="match status" value="1"/>
</dbReference>
<dbReference type="InterPro" id="IPR042096">
    <property type="entry name" value="Dihydro-acid_dehy_C"/>
</dbReference>
<dbReference type="InterPro" id="IPR004404">
    <property type="entry name" value="DihydroxyA_deHydtase"/>
</dbReference>
<dbReference type="InterPro" id="IPR020558">
    <property type="entry name" value="DiOHA_6PGluconate_deHydtase_CS"/>
</dbReference>
<dbReference type="InterPro" id="IPR056740">
    <property type="entry name" value="ILV_EDD_C"/>
</dbReference>
<dbReference type="InterPro" id="IPR000581">
    <property type="entry name" value="ILV_EDD_N"/>
</dbReference>
<dbReference type="InterPro" id="IPR037237">
    <property type="entry name" value="IlvD/EDD_N"/>
</dbReference>
<dbReference type="NCBIfam" id="TIGR00110">
    <property type="entry name" value="ilvD"/>
    <property type="match status" value="1"/>
</dbReference>
<dbReference type="NCBIfam" id="NF009103">
    <property type="entry name" value="PRK12448.1"/>
    <property type="match status" value="1"/>
</dbReference>
<dbReference type="PANTHER" id="PTHR43661">
    <property type="entry name" value="D-XYLONATE DEHYDRATASE"/>
    <property type="match status" value="1"/>
</dbReference>
<dbReference type="PANTHER" id="PTHR43661:SF3">
    <property type="entry name" value="D-XYLONATE DEHYDRATASE YAGF-RELATED"/>
    <property type="match status" value="1"/>
</dbReference>
<dbReference type="Pfam" id="PF24877">
    <property type="entry name" value="ILV_EDD_C"/>
    <property type="match status" value="1"/>
</dbReference>
<dbReference type="Pfam" id="PF00920">
    <property type="entry name" value="ILVD_EDD_N"/>
    <property type="match status" value="1"/>
</dbReference>
<dbReference type="SUPFAM" id="SSF143975">
    <property type="entry name" value="IlvD/EDD N-terminal domain-like"/>
    <property type="match status" value="1"/>
</dbReference>
<dbReference type="SUPFAM" id="SSF52016">
    <property type="entry name" value="LeuD/IlvD-like"/>
    <property type="match status" value="1"/>
</dbReference>
<dbReference type="PROSITE" id="PS00886">
    <property type="entry name" value="ILVD_EDD_1"/>
    <property type="match status" value="1"/>
</dbReference>
<dbReference type="PROSITE" id="PS00887">
    <property type="entry name" value="ILVD_EDD_2"/>
    <property type="match status" value="1"/>
</dbReference>
<feature type="chain" id="PRO_0000225436" description="Dihydroxy-acid dehydratase">
    <location>
        <begin position="1"/>
        <end position="612"/>
    </location>
</feature>
<feature type="active site" description="Proton acceptor" evidence="1">
    <location>
        <position position="515"/>
    </location>
</feature>
<feature type="binding site" evidence="1">
    <location>
        <position position="81"/>
    </location>
    <ligand>
        <name>Mg(2+)</name>
        <dbReference type="ChEBI" id="CHEBI:18420"/>
    </ligand>
</feature>
<feature type="binding site" evidence="1">
    <location>
        <position position="122"/>
    </location>
    <ligand>
        <name>[2Fe-2S] cluster</name>
        <dbReference type="ChEBI" id="CHEBI:190135"/>
    </ligand>
</feature>
<feature type="binding site" evidence="1">
    <location>
        <position position="123"/>
    </location>
    <ligand>
        <name>Mg(2+)</name>
        <dbReference type="ChEBI" id="CHEBI:18420"/>
    </ligand>
</feature>
<feature type="binding site" description="via carbamate group" evidence="1">
    <location>
        <position position="124"/>
    </location>
    <ligand>
        <name>Mg(2+)</name>
        <dbReference type="ChEBI" id="CHEBI:18420"/>
    </ligand>
</feature>
<feature type="binding site" evidence="1">
    <location>
        <position position="193"/>
    </location>
    <ligand>
        <name>[2Fe-2S] cluster</name>
        <dbReference type="ChEBI" id="CHEBI:190135"/>
    </ligand>
</feature>
<feature type="binding site" evidence="1">
    <location>
        <position position="489"/>
    </location>
    <ligand>
        <name>Mg(2+)</name>
        <dbReference type="ChEBI" id="CHEBI:18420"/>
    </ligand>
</feature>
<feature type="modified residue" description="N6-carboxylysine" evidence="1">
    <location>
        <position position="124"/>
    </location>
</feature>
<name>ILVD_XANE5</name>
<gene>
    <name evidence="1" type="primary">ilvD</name>
    <name type="ordered locus">XCV0357</name>
</gene>
<evidence type="ECO:0000255" key="1">
    <source>
        <dbReference type="HAMAP-Rule" id="MF_00012"/>
    </source>
</evidence>
<reference key="1">
    <citation type="journal article" date="2005" name="J. Bacteriol.">
        <title>Insights into genome plasticity and pathogenicity of the plant pathogenic Bacterium Xanthomonas campestris pv. vesicatoria revealed by the complete genome sequence.</title>
        <authorList>
            <person name="Thieme F."/>
            <person name="Koebnik R."/>
            <person name="Bekel T."/>
            <person name="Berger C."/>
            <person name="Boch J."/>
            <person name="Buettner D."/>
            <person name="Caldana C."/>
            <person name="Gaigalat L."/>
            <person name="Goesmann A."/>
            <person name="Kay S."/>
            <person name="Kirchner O."/>
            <person name="Lanz C."/>
            <person name="Linke B."/>
            <person name="McHardy A.C."/>
            <person name="Meyer F."/>
            <person name="Mittenhuber G."/>
            <person name="Nies D.H."/>
            <person name="Niesbach-Kloesgen U."/>
            <person name="Patschkowski T."/>
            <person name="Rueckert C."/>
            <person name="Rupp O."/>
            <person name="Schneiker S."/>
            <person name="Schuster S.C."/>
            <person name="Vorhoelter F.J."/>
            <person name="Weber E."/>
            <person name="Puehler A."/>
            <person name="Bonas U."/>
            <person name="Bartels D."/>
            <person name="Kaiser O."/>
        </authorList>
    </citation>
    <scope>NUCLEOTIDE SEQUENCE [LARGE SCALE GENOMIC DNA]</scope>
    <source>
        <strain>85-10</strain>
    </source>
</reference>
<protein>
    <recommendedName>
        <fullName evidence="1">Dihydroxy-acid dehydratase</fullName>
        <shortName evidence="1">DAD</shortName>
        <ecNumber evidence="1">4.2.1.9</ecNumber>
    </recommendedName>
</protein>
<keyword id="KW-0001">2Fe-2S</keyword>
<keyword id="KW-0028">Amino-acid biosynthesis</keyword>
<keyword id="KW-0100">Branched-chain amino acid biosynthesis</keyword>
<keyword id="KW-0408">Iron</keyword>
<keyword id="KW-0411">Iron-sulfur</keyword>
<keyword id="KW-0456">Lyase</keyword>
<keyword id="KW-0460">Magnesium</keyword>
<keyword id="KW-0479">Metal-binding</keyword>
<proteinExistence type="inferred from homology"/>